<comment type="function">
    <text evidence="1">This protein is involved in the repair of mismatches in DNA. It is possible that it carries out the mismatch recognition step. This protein has a weak ATPase activity.</text>
</comment>
<comment type="similarity">
    <text evidence="1">Belongs to the DNA mismatch repair MutS family.</text>
</comment>
<feature type="chain" id="PRO_1000118689" description="DNA mismatch repair protein MutS">
    <location>
        <begin position="1"/>
        <end position="870"/>
    </location>
</feature>
<feature type="binding site" evidence="1">
    <location>
        <begin position="608"/>
        <end position="615"/>
    </location>
    <ligand>
        <name>ATP</name>
        <dbReference type="ChEBI" id="CHEBI:30616"/>
    </ligand>
</feature>
<dbReference type="EMBL" id="CP001230">
    <property type="protein sequence ID" value="ACO04590.1"/>
    <property type="molecule type" value="Genomic_DNA"/>
</dbReference>
<dbReference type="RefSeq" id="WP_012676827.1">
    <property type="nucleotide sequence ID" value="NC_012440.1"/>
</dbReference>
<dbReference type="SMR" id="C0QPF0"/>
<dbReference type="STRING" id="123214.PERMA_0758"/>
<dbReference type="PaxDb" id="123214-PERMA_0758"/>
<dbReference type="KEGG" id="pmx:PERMA_0758"/>
<dbReference type="eggNOG" id="COG0249">
    <property type="taxonomic scope" value="Bacteria"/>
</dbReference>
<dbReference type="HOGENOM" id="CLU_002472_1_3_0"/>
<dbReference type="OrthoDB" id="9802448at2"/>
<dbReference type="Proteomes" id="UP000001366">
    <property type="component" value="Chromosome"/>
</dbReference>
<dbReference type="GO" id="GO:0005829">
    <property type="term" value="C:cytosol"/>
    <property type="evidence" value="ECO:0007669"/>
    <property type="project" value="TreeGrafter"/>
</dbReference>
<dbReference type="GO" id="GO:0005524">
    <property type="term" value="F:ATP binding"/>
    <property type="evidence" value="ECO:0007669"/>
    <property type="project" value="UniProtKB-UniRule"/>
</dbReference>
<dbReference type="GO" id="GO:0140664">
    <property type="term" value="F:ATP-dependent DNA damage sensor activity"/>
    <property type="evidence" value="ECO:0007669"/>
    <property type="project" value="InterPro"/>
</dbReference>
<dbReference type="GO" id="GO:0003684">
    <property type="term" value="F:damaged DNA binding"/>
    <property type="evidence" value="ECO:0007669"/>
    <property type="project" value="UniProtKB-UniRule"/>
</dbReference>
<dbReference type="GO" id="GO:0030983">
    <property type="term" value="F:mismatched DNA binding"/>
    <property type="evidence" value="ECO:0007669"/>
    <property type="project" value="InterPro"/>
</dbReference>
<dbReference type="GO" id="GO:0006298">
    <property type="term" value="P:mismatch repair"/>
    <property type="evidence" value="ECO:0007669"/>
    <property type="project" value="UniProtKB-UniRule"/>
</dbReference>
<dbReference type="CDD" id="cd03284">
    <property type="entry name" value="ABC_MutS1"/>
    <property type="match status" value="1"/>
</dbReference>
<dbReference type="FunFam" id="3.40.1170.10:FF:000001">
    <property type="entry name" value="DNA mismatch repair protein MutS"/>
    <property type="match status" value="1"/>
</dbReference>
<dbReference type="FunFam" id="3.40.50.300:FF:000870">
    <property type="entry name" value="MutS protein homolog 4"/>
    <property type="match status" value="1"/>
</dbReference>
<dbReference type="Gene3D" id="1.10.1420.10">
    <property type="match status" value="2"/>
</dbReference>
<dbReference type="Gene3D" id="3.40.1170.10">
    <property type="entry name" value="DNA repair protein MutS, domain I"/>
    <property type="match status" value="1"/>
</dbReference>
<dbReference type="Gene3D" id="3.30.420.110">
    <property type="entry name" value="MutS, connector domain"/>
    <property type="match status" value="1"/>
</dbReference>
<dbReference type="Gene3D" id="3.40.50.300">
    <property type="entry name" value="P-loop containing nucleotide triphosphate hydrolases"/>
    <property type="match status" value="1"/>
</dbReference>
<dbReference type="HAMAP" id="MF_00096">
    <property type="entry name" value="MutS"/>
    <property type="match status" value="1"/>
</dbReference>
<dbReference type="InterPro" id="IPR005748">
    <property type="entry name" value="DNA_mismatch_repair_MutS"/>
</dbReference>
<dbReference type="InterPro" id="IPR007695">
    <property type="entry name" value="DNA_mismatch_repair_MutS-lik_N"/>
</dbReference>
<dbReference type="InterPro" id="IPR017261">
    <property type="entry name" value="DNA_mismatch_repair_MutS/MSH"/>
</dbReference>
<dbReference type="InterPro" id="IPR000432">
    <property type="entry name" value="DNA_mismatch_repair_MutS_C"/>
</dbReference>
<dbReference type="InterPro" id="IPR007861">
    <property type="entry name" value="DNA_mismatch_repair_MutS_clamp"/>
</dbReference>
<dbReference type="InterPro" id="IPR007696">
    <property type="entry name" value="DNA_mismatch_repair_MutS_core"/>
</dbReference>
<dbReference type="InterPro" id="IPR016151">
    <property type="entry name" value="DNA_mismatch_repair_MutS_N"/>
</dbReference>
<dbReference type="InterPro" id="IPR036187">
    <property type="entry name" value="DNA_mismatch_repair_MutS_sf"/>
</dbReference>
<dbReference type="InterPro" id="IPR007860">
    <property type="entry name" value="DNA_mmatch_repair_MutS_con_dom"/>
</dbReference>
<dbReference type="InterPro" id="IPR045076">
    <property type="entry name" value="MutS"/>
</dbReference>
<dbReference type="InterPro" id="IPR036678">
    <property type="entry name" value="MutS_con_dom_sf"/>
</dbReference>
<dbReference type="InterPro" id="IPR027417">
    <property type="entry name" value="P-loop_NTPase"/>
</dbReference>
<dbReference type="NCBIfam" id="TIGR01070">
    <property type="entry name" value="mutS1"/>
    <property type="match status" value="1"/>
</dbReference>
<dbReference type="NCBIfam" id="NF003810">
    <property type="entry name" value="PRK05399.1"/>
    <property type="match status" value="1"/>
</dbReference>
<dbReference type="PANTHER" id="PTHR11361:SF34">
    <property type="entry name" value="DNA MISMATCH REPAIR PROTEIN MSH1, MITOCHONDRIAL"/>
    <property type="match status" value="1"/>
</dbReference>
<dbReference type="PANTHER" id="PTHR11361">
    <property type="entry name" value="DNA MISMATCH REPAIR PROTEIN MUTS FAMILY MEMBER"/>
    <property type="match status" value="1"/>
</dbReference>
<dbReference type="Pfam" id="PF01624">
    <property type="entry name" value="MutS_I"/>
    <property type="match status" value="1"/>
</dbReference>
<dbReference type="Pfam" id="PF05188">
    <property type="entry name" value="MutS_II"/>
    <property type="match status" value="1"/>
</dbReference>
<dbReference type="Pfam" id="PF05192">
    <property type="entry name" value="MutS_III"/>
    <property type="match status" value="1"/>
</dbReference>
<dbReference type="Pfam" id="PF05190">
    <property type="entry name" value="MutS_IV"/>
    <property type="match status" value="1"/>
</dbReference>
<dbReference type="Pfam" id="PF00488">
    <property type="entry name" value="MutS_V"/>
    <property type="match status" value="1"/>
</dbReference>
<dbReference type="PIRSF" id="PIRSF037677">
    <property type="entry name" value="DNA_mis_repair_Msh6"/>
    <property type="match status" value="1"/>
</dbReference>
<dbReference type="SMART" id="SM00534">
    <property type="entry name" value="MUTSac"/>
    <property type="match status" value="1"/>
</dbReference>
<dbReference type="SMART" id="SM00533">
    <property type="entry name" value="MUTSd"/>
    <property type="match status" value="1"/>
</dbReference>
<dbReference type="SUPFAM" id="SSF55271">
    <property type="entry name" value="DNA repair protein MutS, domain I"/>
    <property type="match status" value="1"/>
</dbReference>
<dbReference type="SUPFAM" id="SSF53150">
    <property type="entry name" value="DNA repair protein MutS, domain II"/>
    <property type="match status" value="1"/>
</dbReference>
<dbReference type="SUPFAM" id="SSF48334">
    <property type="entry name" value="DNA repair protein MutS, domain III"/>
    <property type="match status" value="1"/>
</dbReference>
<dbReference type="SUPFAM" id="SSF52540">
    <property type="entry name" value="P-loop containing nucleoside triphosphate hydrolases"/>
    <property type="match status" value="1"/>
</dbReference>
<dbReference type="PROSITE" id="PS00486">
    <property type="entry name" value="DNA_MISMATCH_REPAIR_2"/>
    <property type="match status" value="1"/>
</dbReference>
<proteinExistence type="inferred from homology"/>
<organism>
    <name type="scientific">Persephonella marina (strain DSM 14350 / EX-H1)</name>
    <dbReference type="NCBI Taxonomy" id="123214"/>
    <lineage>
        <taxon>Bacteria</taxon>
        <taxon>Pseudomonadati</taxon>
        <taxon>Aquificota</taxon>
        <taxon>Aquificia</taxon>
        <taxon>Aquificales</taxon>
        <taxon>Hydrogenothermaceae</taxon>
        <taxon>Persephonella</taxon>
    </lineage>
</organism>
<sequence>MKEEKNITPMLAQYHKIKDQYPDALVLYRLGDFYEMFYEDAHTGARELNIVLTKKKVGKDRYIPMCGIPFHSADSYITRLVSKGYKVAICEQLEDASKAKGIVKRDVIRVLTPGTYFENEKLKSALLGIYQERGRFYIAYLDLSTGEFTGGSLNRDELISFIGKFQPKEIVVQEGYDFSDLRSQFKSIFFSQLPEDYFSEDTHSEFLGFFKTGHISAFGFDTEEQNVIYPLSAVWKYAKVTQKSFLPFISTPKPYREDSYVRLDYSAQKHLEIVSPNEGNIPLLRVMDRTLTGMGRRKLRFFLLHPLKNSKEIIKRQNAVTELVENTELREKIRDILDQIFDIERLISKISSNTSTPRDLVGLRESLKKVSKLKEISKEIKSDLLKESFERIEDYSWLIEKLDRYLEDDPPIHLKEGGLIKKGVDKDLDELKEIKEKGNEWLKSYQEKLRKETGIQSLKIGFNKVMGYYIEVTKPNLKLVPDHFRRRQTLSNAERFITDELQSFEEKILSADEKIKALEYEIFMRIREEVAFLSDRIGKTAQQVGMIDAIQSLAQIAVEKGWTKPDIHDGYEIEIKEGYHPVIKEFMPDFVPNNLKMNRNSYFHIITGPNMAGKSTFIRQSAIIILLAQTGSYIPAKKGKIGVVDAIFTRIGSGDALAKGLSTFMVEMLEMANIVNNATERSFIVLDEVGRGTSTYDGLSIGWAISEYLAEKVKVKTLFATHYHELTQLEREIKGVKNFHMDIFEDGENIKFLYRVKEGFSNKSYGVHVAKLAGIKEQIIKRAYEILYYFEEQRDKKLEEDIYSLKQKENSYLNEINELPLFKEIEDIEKDEYRQILEEIESIDIGSITPVEALVFLNDLKKKIKRLKES</sequence>
<protein>
    <recommendedName>
        <fullName evidence="1">DNA mismatch repair protein MutS</fullName>
    </recommendedName>
</protein>
<gene>
    <name evidence="1" type="primary">mutS</name>
    <name type="ordered locus">PERMA_0758</name>
</gene>
<name>MUTS_PERMH</name>
<evidence type="ECO:0000255" key="1">
    <source>
        <dbReference type="HAMAP-Rule" id="MF_00096"/>
    </source>
</evidence>
<reference key="1">
    <citation type="journal article" date="2009" name="J. Bacteriol.">
        <title>Complete and draft genome sequences of six members of the Aquificales.</title>
        <authorList>
            <person name="Reysenbach A.-L."/>
            <person name="Hamamura N."/>
            <person name="Podar M."/>
            <person name="Griffiths E."/>
            <person name="Ferreira S."/>
            <person name="Hochstein R."/>
            <person name="Heidelberg J."/>
            <person name="Johnson J."/>
            <person name="Mead D."/>
            <person name="Pohorille A."/>
            <person name="Sarmiento M."/>
            <person name="Schweighofer K."/>
            <person name="Seshadri R."/>
            <person name="Voytek M.A."/>
        </authorList>
    </citation>
    <scope>NUCLEOTIDE SEQUENCE [LARGE SCALE GENOMIC DNA]</scope>
    <source>
        <strain>DSM 14350 / EX-H1</strain>
    </source>
</reference>
<keyword id="KW-0067">ATP-binding</keyword>
<keyword id="KW-0227">DNA damage</keyword>
<keyword id="KW-0234">DNA repair</keyword>
<keyword id="KW-0238">DNA-binding</keyword>
<keyword id="KW-0547">Nucleotide-binding</keyword>
<keyword id="KW-1185">Reference proteome</keyword>
<accession>C0QPF0</accession>